<evidence type="ECO:0000255" key="1">
    <source>
        <dbReference type="HAMAP-Rule" id="MF_00735"/>
    </source>
</evidence>
<reference key="1">
    <citation type="submission" date="2006-09" db="EMBL/GenBank/DDBJ databases">
        <title>Complete sequence of chromosome 1 of Shewanella sp. ANA-3.</title>
        <authorList>
            <person name="Copeland A."/>
            <person name="Lucas S."/>
            <person name="Lapidus A."/>
            <person name="Barry K."/>
            <person name="Detter J.C."/>
            <person name="Glavina del Rio T."/>
            <person name="Hammon N."/>
            <person name="Israni S."/>
            <person name="Dalin E."/>
            <person name="Tice H."/>
            <person name="Pitluck S."/>
            <person name="Chertkov O."/>
            <person name="Brettin T."/>
            <person name="Bruce D."/>
            <person name="Han C."/>
            <person name="Tapia R."/>
            <person name="Gilna P."/>
            <person name="Schmutz J."/>
            <person name="Larimer F."/>
            <person name="Land M."/>
            <person name="Hauser L."/>
            <person name="Kyrpides N."/>
            <person name="Kim E."/>
            <person name="Newman D."/>
            <person name="Salticov C."/>
            <person name="Konstantinidis K."/>
            <person name="Klappenback J."/>
            <person name="Tiedje J."/>
            <person name="Richardson P."/>
        </authorList>
    </citation>
    <scope>NUCLEOTIDE SEQUENCE [LARGE SCALE GENOMIC DNA]</scope>
    <source>
        <strain>ANA-3</strain>
    </source>
</reference>
<organism>
    <name type="scientific">Shewanella sp. (strain ANA-3)</name>
    <dbReference type="NCBI Taxonomy" id="94122"/>
    <lineage>
        <taxon>Bacteria</taxon>
        <taxon>Pseudomonadati</taxon>
        <taxon>Pseudomonadota</taxon>
        <taxon>Gammaproteobacteria</taxon>
        <taxon>Alteromonadales</taxon>
        <taxon>Shewanellaceae</taxon>
        <taxon>Shewanella</taxon>
    </lineage>
</organism>
<gene>
    <name evidence="1" type="primary">prmA</name>
    <name type="ordered locus">Shewana3_0400</name>
</gene>
<accession>A0KS74</accession>
<feature type="chain" id="PRO_1000046090" description="Ribosomal protein L11 methyltransferase">
    <location>
        <begin position="1"/>
        <end position="293"/>
    </location>
</feature>
<feature type="binding site" evidence="1">
    <location>
        <position position="145"/>
    </location>
    <ligand>
        <name>S-adenosyl-L-methionine</name>
        <dbReference type="ChEBI" id="CHEBI:59789"/>
    </ligand>
</feature>
<feature type="binding site" evidence="1">
    <location>
        <position position="166"/>
    </location>
    <ligand>
        <name>S-adenosyl-L-methionine</name>
        <dbReference type="ChEBI" id="CHEBI:59789"/>
    </ligand>
</feature>
<feature type="binding site" evidence="1">
    <location>
        <position position="188"/>
    </location>
    <ligand>
        <name>S-adenosyl-L-methionine</name>
        <dbReference type="ChEBI" id="CHEBI:59789"/>
    </ligand>
</feature>
<feature type="binding site" evidence="1">
    <location>
        <position position="230"/>
    </location>
    <ligand>
        <name>S-adenosyl-L-methionine</name>
        <dbReference type="ChEBI" id="CHEBI:59789"/>
    </ligand>
</feature>
<comment type="function">
    <text evidence="1">Methylates ribosomal protein L11.</text>
</comment>
<comment type="catalytic activity">
    <reaction evidence="1">
        <text>L-lysyl-[protein] + 3 S-adenosyl-L-methionine = N(6),N(6),N(6)-trimethyl-L-lysyl-[protein] + 3 S-adenosyl-L-homocysteine + 3 H(+)</text>
        <dbReference type="Rhea" id="RHEA:54192"/>
        <dbReference type="Rhea" id="RHEA-COMP:9752"/>
        <dbReference type="Rhea" id="RHEA-COMP:13826"/>
        <dbReference type="ChEBI" id="CHEBI:15378"/>
        <dbReference type="ChEBI" id="CHEBI:29969"/>
        <dbReference type="ChEBI" id="CHEBI:57856"/>
        <dbReference type="ChEBI" id="CHEBI:59789"/>
        <dbReference type="ChEBI" id="CHEBI:61961"/>
    </reaction>
</comment>
<comment type="subcellular location">
    <subcellularLocation>
        <location evidence="1">Cytoplasm</location>
    </subcellularLocation>
</comment>
<comment type="similarity">
    <text evidence="1">Belongs to the methyltransferase superfamily. PrmA family.</text>
</comment>
<name>PRMA_SHESA</name>
<sequence>MPWIQLRINTNSDDAETISDLLMEEGAVSITFEDGKDTPIFEPKLGETPLWQDTVVVALFEADTDLAPTIEMLKTLPFLGEHFSHKIEQIEDKDWVREWMDNYHPIQFGKRLWICPSWREVPDPSAVNVILDPGLAFGTGTHPTTALCLEWLDSLDLSNEEVIDFGCGSGILAVAALKLGAKKVTGIDIDYQAIEASKANAERNDVADQLALYLPEDQPADLKADVLVANILAGPLRELAPLIAERVKSGGKLALSGLLKEQAQEISDFYSQWFDMDEAAHKEDWSRLTGKRK</sequence>
<keyword id="KW-0963">Cytoplasm</keyword>
<keyword id="KW-0489">Methyltransferase</keyword>
<keyword id="KW-0949">S-adenosyl-L-methionine</keyword>
<keyword id="KW-0808">Transferase</keyword>
<protein>
    <recommendedName>
        <fullName evidence="1">Ribosomal protein L11 methyltransferase</fullName>
        <shortName evidence="1">L11 Mtase</shortName>
        <ecNumber evidence="1">2.1.1.-</ecNumber>
    </recommendedName>
</protein>
<proteinExistence type="inferred from homology"/>
<dbReference type="EC" id="2.1.1.-" evidence="1"/>
<dbReference type="EMBL" id="CP000469">
    <property type="protein sequence ID" value="ABK46643.1"/>
    <property type="molecule type" value="Genomic_DNA"/>
</dbReference>
<dbReference type="RefSeq" id="WP_011621206.1">
    <property type="nucleotide sequence ID" value="NC_008577.1"/>
</dbReference>
<dbReference type="SMR" id="A0KS74"/>
<dbReference type="STRING" id="94122.Shewana3_0400"/>
<dbReference type="KEGG" id="shn:Shewana3_0400"/>
<dbReference type="eggNOG" id="COG2264">
    <property type="taxonomic scope" value="Bacteria"/>
</dbReference>
<dbReference type="HOGENOM" id="CLU_049382_4_1_6"/>
<dbReference type="OrthoDB" id="9785995at2"/>
<dbReference type="Proteomes" id="UP000002589">
    <property type="component" value="Chromosome"/>
</dbReference>
<dbReference type="GO" id="GO:0005829">
    <property type="term" value="C:cytosol"/>
    <property type="evidence" value="ECO:0007669"/>
    <property type="project" value="TreeGrafter"/>
</dbReference>
<dbReference type="GO" id="GO:0016279">
    <property type="term" value="F:protein-lysine N-methyltransferase activity"/>
    <property type="evidence" value="ECO:0007669"/>
    <property type="project" value="TreeGrafter"/>
</dbReference>
<dbReference type="GO" id="GO:0032259">
    <property type="term" value="P:methylation"/>
    <property type="evidence" value="ECO:0007669"/>
    <property type="project" value="UniProtKB-KW"/>
</dbReference>
<dbReference type="CDD" id="cd02440">
    <property type="entry name" value="AdoMet_MTases"/>
    <property type="match status" value="1"/>
</dbReference>
<dbReference type="Gene3D" id="3.40.50.150">
    <property type="entry name" value="Vaccinia Virus protein VP39"/>
    <property type="match status" value="1"/>
</dbReference>
<dbReference type="HAMAP" id="MF_00735">
    <property type="entry name" value="Methyltr_PrmA"/>
    <property type="match status" value="1"/>
</dbReference>
<dbReference type="InterPro" id="IPR050078">
    <property type="entry name" value="Ribosomal_L11_MeTrfase_PrmA"/>
</dbReference>
<dbReference type="InterPro" id="IPR004498">
    <property type="entry name" value="Ribosomal_PrmA_MeTrfase"/>
</dbReference>
<dbReference type="InterPro" id="IPR029063">
    <property type="entry name" value="SAM-dependent_MTases_sf"/>
</dbReference>
<dbReference type="NCBIfam" id="TIGR00406">
    <property type="entry name" value="prmA"/>
    <property type="match status" value="1"/>
</dbReference>
<dbReference type="PANTHER" id="PTHR43648">
    <property type="entry name" value="ELECTRON TRANSFER FLAVOPROTEIN BETA SUBUNIT LYSINE METHYLTRANSFERASE"/>
    <property type="match status" value="1"/>
</dbReference>
<dbReference type="PANTHER" id="PTHR43648:SF1">
    <property type="entry name" value="ELECTRON TRANSFER FLAVOPROTEIN BETA SUBUNIT LYSINE METHYLTRANSFERASE"/>
    <property type="match status" value="1"/>
</dbReference>
<dbReference type="Pfam" id="PF06325">
    <property type="entry name" value="PrmA"/>
    <property type="match status" value="1"/>
</dbReference>
<dbReference type="PIRSF" id="PIRSF000401">
    <property type="entry name" value="RPL11_MTase"/>
    <property type="match status" value="1"/>
</dbReference>
<dbReference type="SUPFAM" id="SSF53335">
    <property type="entry name" value="S-adenosyl-L-methionine-dependent methyltransferases"/>
    <property type="match status" value="1"/>
</dbReference>